<protein>
    <recommendedName>
        <fullName>Uncharacterized MFS-type transporter EfpA</fullName>
    </recommendedName>
    <alternativeName>
        <fullName>Efflux protein A</fullName>
    </alternativeName>
</protein>
<name>EFPA_MYCTO</name>
<evidence type="ECO:0000255" key="1"/>
<evidence type="ECO:0000256" key="2">
    <source>
        <dbReference type="SAM" id="MobiDB-lite"/>
    </source>
</evidence>
<evidence type="ECO:0000305" key="3"/>
<sequence length="530" mass="55580">MTALNDTERAVRNWTAGRPHRPAPMRPPRSEETASERPSRYYPTWLPSRSFIAAVIAIGGMQLLATMDSTVAIVALPKIQNELSLSDAGRSWVITAYVLTFGGLMLLGGRLGDTIGRKRTFIVGVALFTISSVLCAVAWDEATLVIARLSQGVGSAIASPTGLALVATTFPKGPARNAATAVFAAMTAIGSVMGLVVGGALTEVSWRWAFLVNVPIGLVMIYLARTALRETNKERMKLDATGAILATLACTAAVFAFSIGPEKGWMSGITIGSGLVALAAAVAFVIVERTAENPVVPFHLFRDRNRLVTFSAILLAGGVMFSLTVCIGLYVQDILGYSALRAGVGFIPFVIAMGIGLGVSSQLVSRFSPRVLTIGGGYLLFGAMLYGSFFMHRGVPYFPNLVMPIVVGGIGIGMAVVPLTLSAIAGVGFDQIGPVSAIALMLQSLGGPLVLAVIQAVITSRTLYLGGTTGPVKFMNDVQLAALDHAYTYGLLWVAGAAIIVGGMALFIGYTPQQVAHAQEVKEAIDAGEL</sequence>
<feature type="chain" id="PRO_0000427749" description="Uncharacterized MFS-type transporter EfpA">
    <location>
        <begin position="1"/>
        <end position="530"/>
    </location>
</feature>
<feature type="topological domain" description="Cytoplasmic" evidence="1">
    <location>
        <begin position="1"/>
        <end position="50"/>
    </location>
</feature>
<feature type="transmembrane region" description="Helical" evidence="1">
    <location>
        <begin position="51"/>
        <end position="71"/>
    </location>
</feature>
<feature type="topological domain" description="Extracellular" evidence="1">
    <location>
        <begin position="72"/>
        <end position="91"/>
    </location>
</feature>
<feature type="transmembrane region" description="Helical" evidence="1">
    <location>
        <begin position="92"/>
        <end position="112"/>
    </location>
</feature>
<feature type="topological domain" description="Cytoplasmic" evidence="1">
    <location>
        <begin position="113"/>
        <end position="119"/>
    </location>
</feature>
<feature type="transmembrane region" description="Helical" evidence="1">
    <location>
        <begin position="120"/>
        <end position="140"/>
    </location>
</feature>
<feature type="topological domain" description="Extracellular" evidence="1">
    <location>
        <begin position="141"/>
        <end position="150"/>
    </location>
</feature>
<feature type="transmembrane region" description="Helical" evidence="1">
    <location>
        <begin position="151"/>
        <end position="171"/>
    </location>
</feature>
<feature type="topological domain" description="Cytoplasmic" evidence="1">
    <location>
        <begin position="172"/>
        <end position="180"/>
    </location>
</feature>
<feature type="transmembrane region" description="Helical" evidence="1">
    <location>
        <begin position="181"/>
        <end position="201"/>
    </location>
</feature>
<feature type="topological domain" description="Extracellular" evidence="1">
    <location>
        <begin position="202"/>
        <end position="203"/>
    </location>
</feature>
<feature type="transmembrane region" description="Helical" evidence="1">
    <location>
        <begin position="204"/>
        <end position="224"/>
    </location>
</feature>
<feature type="topological domain" description="Cytoplasmic" evidence="1">
    <location>
        <begin position="225"/>
        <end position="239"/>
    </location>
</feature>
<feature type="transmembrane region" description="Helical" evidence="1">
    <location>
        <begin position="240"/>
        <end position="260"/>
    </location>
</feature>
<feature type="topological domain" description="Extracellular" evidence="1">
    <location>
        <begin position="261"/>
        <end position="266"/>
    </location>
</feature>
<feature type="transmembrane region" description="Helical" evidence="1">
    <location>
        <begin position="267"/>
        <end position="287"/>
    </location>
</feature>
<feature type="topological domain" description="Cytoplasmic" evidence="1">
    <location>
        <begin position="288"/>
        <end position="306"/>
    </location>
</feature>
<feature type="transmembrane region" description="Helical" evidence="1">
    <location>
        <begin position="307"/>
        <end position="327"/>
    </location>
</feature>
<feature type="topological domain" description="Extracellular" evidence="1">
    <location>
        <begin position="328"/>
        <end position="343"/>
    </location>
</feature>
<feature type="transmembrane region" description="Helical" evidence="1">
    <location>
        <begin position="344"/>
        <end position="364"/>
    </location>
</feature>
<feature type="topological domain" description="Cytoplasmic" evidence="1">
    <location>
        <begin position="365"/>
        <end position="370"/>
    </location>
</feature>
<feature type="transmembrane region" description="Helical" evidence="1">
    <location>
        <begin position="371"/>
        <end position="391"/>
    </location>
</feature>
<feature type="topological domain" description="Extracellular" evidence="1">
    <location>
        <begin position="392"/>
        <end position="400"/>
    </location>
</feature>
<feature type="transmembrane region" description="Helical" evidence="1">
    <location>
        <begin position="401"/>
        <end position="421"/>
    </location>
</feature>
<feature type="topological domain" description="Cytoplasmic" evidence="1">
    <location>
        <begin position="422"/>
        <end position="437"/>
    </location>
</feature>
<feature type="transmembrane region" description="Helical" evidence="1">
    <location>
        <begin position="438"/>
        <end position="458"/>
    </location>
</feature>
<feature type="topological domain" description="Extracellular" evidence="1">
    <location>
        <begin position="459"/>
        <end position="488"/>
    </location>
</feature>
<feature type="transmembrane region" description="Helical" evidence="1">
    <location>
        <begin position="489"/>
        <end position="509"/>
    </location>
</feature>
<feature type="topological domain" description="Cytoplasmic" evidence="1">
    <location>
        <begin position="510"/>
        <end position="530"/>
    </location>
</feature>
<feature type="region of interest" description="Disordered" evidence="2">
    <location>
        <begin position="1"/>
        <end position="38"/>
    </location>
</feature>
<feature type="compositionally biased region" description="Basic and acidic residues" evidence="2">
    <location>
        <begin position="1"/>
        <end position="11"/>
    </location>
</feature>
<feature type="compositionally biased region" description="Basic and acidic residues" evidence="2">
    <location>
        <begin position="28"/>
        <end position="38"/>
    </location>
</feature>
<organism>
    <name type="scientific">Mycobacterium tuberculosis (strain CDC 1551 / Oshkosh)</name>
    <dbReference type="NCBI Taxonomy" id="83331"/>
    <lineage>
        <taxon>Bacteria</taxon>
        <taxon>Bacillati</taxon>
        <taxon>Actinomycetota</taxon>
        <taxon>Actinomycetes</taxon>
        <taxon>Mycobacteriales</taxon>
        <taxon>Mycobacteriaceae</taxon>
        <taxon>Mycobacterium</taxon>
        <taxon>Mycobacterium tuberculosis complex</taxon>
    </lineage>
</organism>
<proteinExistence type="inferred from homology"/>
<accession>P9WJY4</accession>
<accession>L0TDQ9</accession>
<accession>O05813</accession>
<accession>Q50747</accession>
<accession>Q7D6G8</accession>
<keyword id="KW-1003">Cell membrane</keyword>
<keyword id="KW-0472">Membrane</keyword>
<keyword id="KW-1185">Reference proteome</keyword>
<keyword id="KW-0812">Transmembrane</keyword>
<keyword id="KW-1133">Transmembrane helix</keyword>
<keyword id="KW-0813">Transport</keyword>
<dbReference type="EMBL" id="AE000516">
    <property type="protein sequence ID" value="AAK47238.1"/>
    <property type="molecule type" value="Genomic_DNA"/>
</dbReference>
<dbReference type="PIR" id="A70589">
    <property type="entry name" value="A70589"/>
</dbReference>
<dbReference type="RefSeq" id="WP_003414532.1">
    <property type="nucleotide sequence ID" value="NZ_KK341227.1"/>
</dbReference>
<dbReference type="SMR" id="P9WJY4"/>
<dbReference type="KEGG" id="mtc:MT2912"/>
<dbReference type="PATRIC" id="fig|83331.31.peg.3146"/>
<dbReference type="HOGENOM" id="CLU_000960_28_2_11"/>
<dbReference type="Proteomes" id="UP000001020">
    <property type="component" value="Chromosome"/>
</dbReference>
<dbReference type="GO" id="GO:0005886">
    <property type="term" value="C:plasma membrane"/>
    <property type="evidence" value="ECO:0007669"/>
    <property type="project" value="UniProtKB-SubCell"/>
</dbReference>
<dbReference type="GO" id="GO:0022857">
    <property type="term" value="F:transmembrane transporter activity"/>
    <property type="evidence" value="ECO:0007669"/>
    <property type="project" value="InterPro"/>
</dbReference>
<dbReference type="CDD" id="cd17321">
    <property type="entry name" value="MFS_MMR_MDR_like"/>
    <property type="match status" value="1"/>
</dbReference>
<dbReference type="Gene3D" id="1.20.1250.20">
    <property type="entry name" value="MFS general substrate transporter like domains"/>
    <property type="match status" value="1"/>
</dbReference>
<dbReference type="Gene3D" id="1.20.1720.10">
    <property type="entry name" value="Multidrug resistance protein D"/>
    <property type="match status" value="1"/>
</dbReference>
<dbReference type="InterPro" id="IPR011701">
    <property type="entry name" value="MFS"/>
</dbReference>
<dbReference type="InterPro" id="IPR020846">
    <property type="entry name" value="MFS_dom"/>
</dbReference>
<dbReference type="InterPro" id="IPR036259">
    <property type="entry name" value="MFS_trans_sf"/>
</dbReference>
<dbReference type="PANTHER" id="PTHR42718:SF46">
    <property type="entry name" value="BLR6921 PROTEIN"/>
    <property type="match status" value="1"/>
</dbReference>
<dbReference type="PANTHER" id="PTHR42718">
    <property type="entry name" value="MAJOR FACILITATOR SUPERFAMILY MULTIDRUG TRANSPORTER MFSC"/>
    <property type="match status" value="1"/>
</dbReference>
<dbReference type="Pfam" id="PF07690">
    <property type="entry name" value="MFS_1"/>
    <property type="match status" value="1"/>
</dbReference>
<dbReference type="SUPFAM" id="SSF103473">
    <property type="entry name" value="MFS general substrate transporter"/>
    <property type="match status" value="1"/>
</dbReference>
<dbReference type="PROSITE" id="PS50850">
    <property type="entry name" value="MFS"/>
    <property type="match status" value="1"/>
</dbReference>
<gene>
    <name type="primary">efpA</name>
    <name type="ordered locus">MT2912</name>
</gene>
<reference key="1">
    <citation type="journal article" date="2002" name="J. Bacteriol.">
        <title>Whole-genome comparison of Mycobacterium tuberculosis clinical and laboratory strains.</title>
        <authorList>
            <person name="Fleischmann R.D."/>
            <person name="Alland D."/>
            <person name="Eisen J.A."/>
            <person name="Carpenter L."/>
            <person name="White O."/>
            <person name="Peterson J.D."/>
            <person name="DeBoy R.T."/>
            <person name="Dodson R.J."/>
            <person name="Gwinn M.L."/>
            <person name="Haft D.H."/>
            <person name="Hickey E.K."/>
            <person name="Kolonay J.F."/>
            <person name="Nelson W.C."/>
            <person name="Umayam L.A."/>
            <person name="Ermolaeva M.D."/>
            <person name="Salzberg S.L."/>
            <person name="Delcher A."/>
            <person name="Utterback T.R."/>
            <person name="Weidman J.F."/>
            <person name="Khouri H.M."/>
            <person name="Gill J."/>
            <person name="Mikula A."/>
            <person name="Bishai W."/>
            <person name="Jacobs W.R. Jr."/>
            <person name="Venter J.C."/>
            <person name="Fraser C.M."/>
        </authorList>
    </citation>
    <scope>NUCLEOTIDE SEQUENCE [LARGE SCALE GENOMIC DNA]</scope>
    <source>
        <strain>CDC 1551 / Oshkosh</strain>
    </source>
</reference>
<comment type="subcellular location">
    <subcellularLocation>
        <location evidence="3">Cell membrane</location>
        <topology evidence="3">Multi-pass membrane protein</topology>
    </subcellularLocation>
</comment>
<comment type="similarity">
    <text evidence="3">Belongs to the major facilitator superfamily.</text>
</comment>